<sequence length="1400" mass="155631">MNQEVMNLFNPQAPAQTFDSIRISIASPEKILSWSYGEIKKPETINYRTFKPERDGLFCARIFGPIKDYECLCGKYKRMKYKGIICEKCGVEVTLSRVRRERMGHIELAAPVAHIWFLKSLPSRIGTLLDMTLKDIERVLYFENYIVTEPGLTSLKEHQLLSEEEYMIAVDEFGEDQFTALIGAEAIYELLASMELEKIAADLRVDLAETTSDLKQKKLMKRLKIVENFLESGNRPEWMIMKIVPVIPPDLRPLVPLDGGRFATSDLNDLYRRVINRNNRLKRLIELRAPGIIIRNEKRMLQEAVDALFDNGRRGRVITGANKRPLKSLSDMLKGKQGRFRQNLLGKRVDYSGRSVIVTGPELKLHQCGLPKKMALELFKPFIYARLDAKGYSSTVKQAKKLVEKERPEVWDILDEVIREHPVLLNRAPTLHRLGIQAFEPTLIEGKAIQLHPLVCTAFNADFDGDQMAVHVPLSLEAQLEARVLMMSTNNILHPANGAPIIVPSQDMVLGLYYLSIVAEKEPGEGMIFADMGELQHALENKVVTLHTKIKSRFKTVDAEGNPVSKIYDTTPGRMIMGELLPKNVNVPFDICNQEMTKKNISKMIDHVYRHCGQKETVIFCDRIMQLGFAHACRAGISFGKDDMVIPESKAKIVAETEALTTEYEQQYNDGLITQGEKYNKVVDAWGKATDKITEEMMARLKAVEFDPVTGRQKQMNSVYMMSHSGARGSVNQMRQLGGMRGLMAKPSGEIIETPIISNFKEGLTVNEYFNSTHGARKGLADTALKTANSGYLTRRLVDVAQDAIISEVDCGAEIGLTMQPIVDAGQIVASIGQRVLGRTALDPILHPVTGEVIVEAGRMIEEKDVEIIEKAGIQSIRIRSALTCETRDGVCAKCYGRDLARGTPVNQGEAVGVIAAQSIGEPGTQLTMRTFHLGGTAQVVDSSYLEASYEGTVKLRNRNVVRNSDGNLVVMGRNMAVLILDATGKERAVHRVTYGSRLFVDEGDTVKRGQRIAEWDPYTRPIMTEVEGYVEFEDLVDGLSVSETADESTGITKRVVIDWRSTPRGSDLKPAMVIKDKAGKILKLSKGGDARFLLSVESILSVEPGAHVKAGDVIARLPMESAKTKDITGGLPRVAELFEARRPKDHAIIAEIDGTVRFGRDYKNKRRIIIEPNDDTIEPVEYLIPKGKPFHLQDGDVIEKGEYILDGNPAPHDILAIKGVEALASYLVNEIQEVYRLQGVLINDKHIEVIVRQMLQKVEITESGDTGYIPGDHVDRIELEEINERLIEEGKKPGSGNPVLLGITKASLQTPSFISAASFQETTRVLTEAAVAGKMDTLQGLKENVIVGRLIPAGTGGMTNQIRRIATARDELIIDERRKTSGSAEANAMLVDMTNNAAE</sequence>
<reference key="1">
    <citation type="submission" date="2007-10" db="EMBL/GenBank/DDBJ databases">
        <title>Brucella canis ATCC 23365 whole genome shotgun sequencing project.</title>
        <authorList>
            <person name="Setubal J.C."/>
            <person name="Bowns C."/>
            <person name="Boyle S."/>
            <person name="Crasta O.R."/>
            <person name="Czar M.J."/>
            <person name="Dharmanolla C."/>
            <person name="Gillespie J.J."/>
            <person name="Kenyon R.W."/>
            <person name="Lu J."/>
            <person name="Mane S."/>
            <person name="Mohapatra S."/>
            <person name="Nagrani S."/>
            <person name="Purkayastha A."/>
            <person name="Rajasimha H.K."/>
            <person name="Shallom J.M."/>
            <person name="Shallom S."/>
            <person name="Shukla M."/>
            <person name="Snyder E.E."/>
            <person name="Sobral B.W."/>
            <person name="Wattam A.R."/>
            <person name="Will R."/>
            <person name="Williams K."/>
            <person name="Yoo H."/>
            <person name="Bruce D."/>
            <person name="Detter C."/>
            <person name="Munk C."/>
            <person name="Brettin T.S."/>
        </authorList>
    </citation>
    <scope>NUCLEOTIDE SEQUENCE [LARGE SCALE GENOMIC DNA]</scope>
    <source>
        <strain>ATCC 23365 / NCTC 10854 / RM-666</strain>
    </source>
</reference>
<comment type="function">
    <text evidence="1">DNA-dependent RNA polymerase catalyzes the transcription of DNA into RNA using the four ribonucleoside triphosphates as substrates.</text>
</comment>
<comment type="catalytic activity">
    <reaction evidence="1">
        <text>RNA(n) + a ribonucleoside 5'-triphosphate = RNA(n+1) + diphosphate</text>
        <dbReference type="Rhea" id="RHEA:21248"/>
        <dbReference type="Rhea" id="RHEA-COMP:14527"/>
        <dbReference type="Rhea" id="RHEA-COMP:17342"/>
        <dbReference type="ChEBI" id="CHEBI:33019"/>
        <dbReference type="ChEBI" id="CHEBI:61557"/>
        <dbReference type="ChEBI" id="CHEBI:140395"/>
        <dbReference type="EC" id="2.7.7.6"/>
    </reaction>
</comment>
<comment type="cofactor">
    <cofactor evidence="1">
        <name>Mg(2+)</name>
        <dbReference type="ChEBI" id="CHEBI:18420"/>
    </cofactor>
    <text evidence="1">Binds 1 Mg(2+) ion per subunit.</text>
</comment>
<comment type="cofactor">
    <cofactor evidence="1">
        <name>Zn(2+)</name>
        <dbReference type="ChEBI" id="CHEBI:29105"/>
    </cofactor>
    <text evidence="1">Binds 2 Zn(2+) ions per subunit.</text>
</comment>
<comment type="subunit">
    <text evidence="1">The RNAP catalytic core consists of 2 alpha, 1 beta, 1 beta' and 1 omega subunit. When a sigma factor is associated with the core the holoenzyme is formed, which can initiate transcription.</text>
</comment>
<comment type="similarity">
    <text evidence="1">Belongs to the RNA polymerase beta' chain family.</text>
</comment>
<proteinExistence type="inferred from homology"/>
<name>RPOC_BRUC2</name>
<organism>
    <name type="scientific">Brucella canis (strain ATCC 23365 / NCTC 10854 / RM-666)</name>
    <dbReference type="NCBI Taxonomy" id="483179"/>
    <lineage>
        <taxon>Bacteria</taxon>
        <taxon>Pseudomonadati</taxon>
        <taxon>Pseudomonadota</taxon>
        <taxon>Alphaproteobacteria</taxon>
        <taxon>Hyphomicrobiales</taxon>
        <taxon>Brucellaceae</taxon>
        <taxon>Brucella/Ochrobactrum group</taxon>
        <taxon>Brucella</taxon>
    </lineage>
</organism>
<dbReference type="EC" id="2.7.7.6" evidence="1"/>
<dbReference type="EMBL" id="CP000872">
    <property type="protein sequence ID" value="ABX62313.1"/>
    <property type="molecule type" value="Genomic_DNA"/>
</dbReference>
<dbReference type="RefSeq" id="WP_012219660.1">
    <property type="nucleotide sequence ID" value="NC_010103.1"/>
</dbReference>
<dbReference type="SMR" id="A9M5Q8"/>
<dbReference type="GeneID" id="55590915"/>
<dbReference type="KEGG" id="bcs:BCAN_A1264"/>
<dbReference type="HOGENOM" id="CLU_000524_3_1_5"/>
<dbReference type="PhylomeDB" id="A9M5Q8"/>
<dbReference type="Proteomes" id="UP000001385">
    <property type="component" value="Chromosome I"/>
</dbReference>
<dbReference type="GO" id="GO:0000428">
    <property type="term" value="C:DNA-directed RNA polymerase complex"/>
    <property type="evidence" value="ECO:0007669"/>
    <property type="project" value="UniProtKB-KW"/>
</dbReference>
<dbReference type="GO" id="GO:0003677">
    <property type="term" value="F:DNA binding"/>
    <property type="evidence" value="ECO:0007669"/>
    <property type="project" value="UniProtKB-UniRule"/>
</dbReference>
<dbReference type="GO" id="GO:0003899">
    <property type="term" value="F:DNA-directed RNA polymerase activity"/>
    <property type="evidence" value="ECO:0007669"/>
    <property type="project" value="UniProtKB-UniRule"/>
</dbReference>
<dbReference type="GO" id="GO:0000287">
    <property type="term" value="F:magnesium ion binding"/>
    <property type="evidence" value="ECO:0007669"/>
    <property type="project" value="UniProtKB-UniRule"/>
</dbReference>
<dbReference type="GO" id="GO:0008270">
    <property type="term" value="F:zinc ion binding"/>
    <property type="evidence" value="ECO:0007669"/>
    <property type="project" value="UniProtKB-UniRule"/>
</dbReference>
<dbReference type="GO" id="GO:0006351">
    <property type="term" value="P:DNA-templated transcription"/>
    <property type="evidence" value="ECO:0007669"/>
    <property type="project" value="UniProtKB-UniRule"/>
</dbReference>
<dbReference type="CDD" id="cd02655">
    <property type="entry name" value="RNAP_beta'_C"/>
    <property type="match status" value="1"/>
</dbReference>
<dbReference type="CDD" id="cd01609">
    <property type="entry name" value="RNAP_beta'_N"/>
    <property type="match status" value="1"/>
</dbReference>
<dbReference type="FunFam" id="4.10.860.120:FF:000001">
    <property type="entry name" value="DNA-directed RNA polymerase subunit beta"/>
    <property type="match status" value="1"/>
</dbReference>
<dbReference type="Gene3D" id="1.10.132.30">
    <property type="match status" value="1"/>
</dbReference>
<dbReference type="Gene3D" id="1.10.150.390">
    <property type="match status" value="1"/>
</dbReference>
<dbReference type="Gene3D" id="1.10.1790.20">
    <property type="match status" value="1"/>
</dbReference>
<dbReference type="Gene3D" id="1.10.40.90">
    <property type="match status" value="1"/>
</dbReference>
<dbReference type="Gene3D" id="2.40.40.20">
    <property type="match status" value="1"/>
</dbReference>
<dbReference type="Gene3D" id="2.40.50.100">
    <property type="match status" value="3"/>
</dbReference>
<dbReference type="Gene3D" id="4.10.860.120">
    <property type="entry name" value="RNA polymerase II, clamp domain"/>
    <property type="match status" value="1"/>
</dbReference>
<dbReference type="Gene3D" id="1.10.274.100">
    <property type="entry name" value="RNA polymerase Rpb1, domain 3"/>
    <property type="match status" value="2"/>
</dbReference>
<dbReference type="HAMAP" id="MF_01322">
    <property type="entry name" value="RNApol_bact_RpoC"/>
    <property type="match status" value="1"/>
</dbReference>
<dbReference type="InterPro" id="IPR045867">
    <property type="entry name" value="DNA-dir_RpoC_beta_prime"/>
</dbReference>
<dbReference type="InterPro" id="IPR012754">
    <property type="entry name" value="DNA-dir_RpoC_beta_prime_bact"/>
</dbReference>
<dbReference type="InterPro" id="IPR000722">
    <property type="entry name" value="RNA_pol_asu"/>
</dbReference>
<dbReference type="InterPro" id="IPR006592">
    <property type="entry name" value="RNA_pol_N"/>
</dbReference>
<dbReference type="InterPro" id="IPR007080">
    <property type="entry name" value="RNA_pol_Rpb1_1"/>
</dbReference>
<dbReference type="InterPro" id="IPR007066">
    <property type="entry name" value="RNA_pol_Rpb1_3"/>
</dbReference>
<dbReference type="InterPro" id="IPR042102">
    <property type="entry name" value="RNA_pol_Rpb1_3_sf"/>
</dbReference>
<dbReference type="InterPro" id="IPR007083">
    <property type="entry name" value="RNA_pol_Rpb1_4"/>
</dbReference>
<dbReference type="InterPro" id="IPR007081">
    <property type="entry name" value="RNA_pol_Rpb1_5"/>
</dbReference>
<dbReference type="InterPro" id="IPR044893">
    <property type="entry name" value="RNA_pol_Rpb1_clamp_domain"/>
</dbReference>
<dbReference type="InterPro" id="IPR038120">
    <property type="entry name" value="Rpb1_funnel_sf"/>
</dbReference>
<dbReference type="NCBIfam" id="TIGR02386">
    <property type="entry name" value="rpoC_TIGR"/>
    <property type="match status" value="1"/>
</dbReference>
<dbReference type="PANTHER" id="PTHR19376">
    <property type="entry name" value="DNA-DIRECTED RNA POLYMERASE"/>
    <property type="match status" value="1"/>
</dbReference>
<dbReference type="PANTHER" id="PTHR19376:SF54">
    <property type="entry name" value="DNA-DIRECTED RNA POLYMERASE SUBUNIT BETA"/>
    <property type="match status" value="1"/>
</dbReference>
<dbReference type="Pfam" id="PF04997">
    <property type="entry name" value="RNA_pol_Rpb1_1"/>
    <property type="match status" value="1"/>
</dbReference>
<dbReference type="Pfam" id="PF00623">
    <property type="entry name" value="RNA_pol_Rpb1_2"/>
    <property type="match status" value="1"/>
</dbReference>
<dbReference type="Pfam" id="PF04983">
    <property type="entry name" value="RNA_pol_Rpb1_3"/>
    <property type="match status" value="1"/>
</dbReference>
<dbReference type="Pfam" id="PF05000">
    <property type="entry name" value="RNA_pol_Rpb1_4"/>
    <property type="match status" value="1"/>
</dbReference>
<dbReference type="Pfam" id="PF04998">
    <property type="entry name" value="RNA_pol_Rpb1_5"/>
    <property type="match status" value="1"/>
</dbReference>
<dbReference type="SMART" id="SM00663">
    <property type="entry name" value="RPOLA_N"/>
    <property type="match status" value="1"/>
</dbReference>
<dbReference type="SUPFAM" id="SSF64484">
    <property type="entry name" value="beta and beta-prime subunits of DNA dependent RNA-polymerase"/>
    <property type="match status" value="1"/>
</dbReference>
<gene>
    <name evidence="1" type="primary">rpoC</name>
    <name type="ordered locus">BCAN_A1264</name>
</gene>
<protein>
    <recommendedName>
        <fullName evidence="1">DNA-directed RNA polymerase subunit beta'</fullName>
        <shortName evidence="1">RNAP subunit beta'</shortName>
        <ecNumber evidence="1">2.7.7.6</ecNumber>
    </recommendedName>
    <alternativeName>
        <fullName evidence="1">RNA polymerase subunit beta'</fullName>
    </alternativeName>
    <alternativeName>
        <fullName evidence="1">Transcriptase subunit beta'</fullName>
    </alternativeName>
</protein>
<feature type="chain" id="PRO_1000086391" description="DNA-directed RNA polymerase subunit beta'">
    <location>
        <begin position="1"/>
        <end position="1400"/>
    </location>
</feature>
<feature type="binding site" evidence="1">
    <location>
        <position position="71"/>
    </location>
    <ligand>
        <name>Zn(2+)</name>
        <dbReference type="ChEBI" id="CHEBI:29105"/>
        <label>1</label>
    </ligand>
</feature>
<feature type="binding site" evidence="1">
    <location>
        <position position="73"/>
    </location>
    <ligand>
        <name>Zn(2+)</name>
        <dbReference type="ChEBI" id="CHEBI:29105"/>
        <label>1</label>
    </ligand>
</feature>
<feature type="binding site" evidence="1">
    <location>
        <position position="86"/>
    </location>
    <ligand>
        <name>Zn(2+)</name>
        <dbReference type="ChEBI" id="CHEBI:29105"/>
        <label>1</label>
    </ligand>
</feature>
<feature type="binding site" evidence="1">
    <location>
        <position position="89"/>
    </location>
    <ligand>
        <name>Zn(2+)</name>
        <dbReference type="ChEBI" id="CHEBI:29105"/>
        <label>1</label>
    </ligand>
</feature>
<feature type="binding site" evidence="1">
    <location>
        <position position="462"/>
    </location>
    <ligand>
        <name>Mg(2+)</name>
        <dbReference type="ChEBI" id="CHEBI:18420"/>
    </ligand>
</feature>
<feature type="binding site" evidence="1">
    <location>
        <position position="464"/>
    </location>
    <ligand>
        <name>Mg(2+)</name>
        <dbReference type="ChEBI" id="CHEBI:18420"/>
    </ligand>
</feature>
<feature type="binding site" evidence="1">
    <location>
        <position position="466"/>
    </location>
    <ligand>
        <name>Mg(2+)</name>
        <dbReference type="ChEBI" id="CHEBI:18420"/>
    </ligand>
</feature>
<feature type="binding site" evidence="1">
    <location>
        <position position="811"/>
    </location>
    <ligand>
        <name>Zn(2+)</name>
        <dbReference type="ChEBI" id="CHEBI:29105"/>
        <label>2</label>
    </ligand>
</feature>
<feature type="binding site" evidence="1">
    <location>
        <position position="885"/>
    </location>
    <ligand>
        <name>Zn(2+)</name>
        <dbReference type="ChEBI" id="CHEBI:29105"/>
        <label>2</label>
    </ligand>
</feature>
<feature type="binding site" evidence="1">
    <location>
        <position position="892"/>
    </location>
    <ligand>
        <name>Zn(2+)</name>
        <dbReference type="ChEBI" id="CHEBI:29105"/>
        <label>2</label>
    </ligand>
</feature>
<feature type="binding site" evidence="1">
    <location>
        <position position="895"/>
    </location>
    <ligand>
        <name>Zn(2+)</name>
        <dbReference type="ChEBI" id="CHEBI:29105"/>
        <label>2</label>
    </ligand>
</feature>
<keyword id="KW-0240">DNA-directed RNA polymerase</keyword>
<keyword id="KW-0460">Magnesium</keyword>
<keyword id="KW-0479">Metal-binding</keyword>
<keyword id="KW-0548">Nucleotidyltransferase</keyword>
<keyword id="KW-1185">Reference proteome</keyword>
<keyword id="KW-0804">Transcription</keyword>
<keyword id="KW-0808">Transferase</keyword>
<keyword id="KW-0862">Zinc</keyword>
<evidence type="ECO:0000255" key="1">
    <source>
        <dbReference type="HAMAP-Rule" id="MF_01322"/>
    </source>
</evidence>
<accession>A9M5Q8</accession>